<proteinExistence type="evidence at protein level"/>
<evidence type="ECO:0000250" key="1">
    <source>
        <dbReference type="UniProtKB" id="A8HMZ4"/>
    </source>
</evidence>
<evidence type="ECO:0000250" key="2">
    <source>
        <dbReference type="UniProtKB" id="Q5JU00"/>
    </source>
</evidence>
<evidence type="ECO:0000256" key="3">
    <source>
        <dbReference type="SAM" id="MobiDB-lite"/>
    </source>
</evidence>
<evidence type="ECO:0000269" key="4">
    <source>
    </source>
</evidence>
<evidence type="ECO:0000269" key="5">
    <source>
    </source>
</evidence>
<evidence type="ECO:0000269" key="6">
    <source>
    </source>
</evidence>
<evidence type="ECO:0000269" key="7">
    <source ref="2"/>
</evidence>
<evidence type="ECO:0000303" key="8">
    <source>
    </source>
</evidence>
<evidence type="ECO:0000305" key="9"/>
<reference key="1">
    <citation type="journal article" date="1989" name="Immunogenetics">
        <title>A mouse chromosome 17 gene encodes a testes-specific transcript with unusual properties.</title>
        <authorList>
            <person name="Sarvetnick N."/>
            <person name="Tsai J.-Y."/>
            <person name="Fox H."/>
            <person name="Pilder S.H."/>
            <person name="Silver L.M."/>
        </authorList>
    </citation>
    <scope>NUCLEOTIDE SEQUENCE [MRNA]</scope>
    <scope>TISSUE SPECIFICITY</scope>
</reference>
<reference key="2">
    <citation type="journal article" date="1990" name="Immunogenetics">
        <authorList>
            <person name="Sarvetnick N."/>
            <person name="Tsai J.-Y."/>
            <person name="Fox H."/>
            <person name="Pilder S.H."/>
            <person name="Silver L."/>
        </authorList>
    </citation>
    <scope>ERRATUM OF PUBMED:2568335</scope>
</reference>
<reference key="3">
    <citation type="journal article" date="2004" name="Genome Res.">
        <title>The status, quality, and expansion of the NIH full-length cDNA project: the Mammalian Gene Collection (MGC).</title>
        <authorList>
            <consortium name="The MGC Project Team"/>
        </authorList>
    </citation>
    <scope>NUCLEOTIDE SEQUENCE [LARGE SCALE MRNA]</scope>
    <source>
        <tissue>Brain</tissue>
    </source>
</reference>
<reference key="4">
    <citation type="journal article" date="2010" name="Cell">
        <title>A tissue-specific atlas of mouse protein phosphorylation and expression.</title>
        <authorList>
            <person name="Huttlin E.L."/>
            <person name="Jedrychowski M.P."/>
            <person name="Elias J.E."/>
            <person name="Goswami T."/>
            <person name="Rad R."/>
            <person name="Beausoleil S.A."/>
            <person name="Villen J."/>
            <person name="Haas W."/>
            <person name="Sowa M.E."/>
            <person name="Gygi S.P."/>
        </authorList>
    </citation>
    <scope>IDENTIFICATION BY MASS SPECTROMETRY [LARGE SCALE ANALYSIS]</scope>
    <source>
        <tissue>Testis</tissue>
    </source>
</reference>
<reference key="5">
    <citation type="journal article" date="2017" name="Proc. Natl. Acad. Sci. U.S.A.">
        <title>TCTE1 is a conserved component of the dynein regulatory complex and is required for motility and metabolism in mouse spermatozoa.</title>
        <authorList>
            <person name="Castaneda J.M."/>
            <person name="Hua R."/>
            <person name="Miyata H."/>
            <person name="Oji A."/>
            <person name="Guo Y."/>
            <person name="Cheng Y."/>
            <person name="Zhou T."/>
            <person name="Guo X."/>
            <person name="Cui Y."/>
            <person name="Shen B."/>
            <person name="Wang Z."/>
            <person name="Hu Z."/>
            <person name="Zhou Z."/>
            <person name="Sha J."/>
            <person name="Prunskaite-Hyyrylainen R."/>
            <person name="Yu Z."/>
            <person name="Ramirez-Solis R."/>
            <person name="Ikawa M."/>
            <person name="Matzuk M.M."/>
            <person name="Liu M."/>
        </authorList>
    </citation>
    <scope>FUNCTION</scope>
    <scope>DISRUPTION PHENOTYPE</scope>
    <scope>SUBCELLULAR LOCATION</scope>
    <scope>TISSUE SPECIFICITY</scope>
    <scope>INTERACTION WITH FBXL13; DRC3 AND DRC7</scope>
</reference>
<reference key="6">
    <citation type="journal article" date="2020" name="PLoS Genet.">
        <title>Nexin-Dynein regulatory complex component DRC7 but not FBXL13 is required for sperm flagellum formation and male fertility in mice.</title>
        <authorList>
            <person name="Morohoshi A."/>
            <person name="Miyata H."/>
            <person name="Shimada K."/>
            <person name="Nozawa K."/>
            <person name="Matsumura T."/>
            <person name="Yanase R."/>
            <person name="Shiba K."/>
            <person name="Inaba K."/>
            <person name="Ikawa M."/>
        </authorList>
    </citation>
    <scope>INTERACTION WITH DRC7</scope>
</reference>
<dbReference type="EMBL" id="M28821">
    <property type="protein sequence ID" value="AAA40406.1"/>
    <property type="status" value="ALT_FRAME"/>
    <property type="molecule type" value="mRNA"/>
</dbReference>
<dbReference type="EMBL" id="BC145741">
    <property type="protein sequence ID" value="AAI45742.1"/>
    <property type="molecule type" value="mRNA"/>
</dbReference>
<dbReference type="CCDS" id="CCDS37629.1"/>
<dbReference type="PIR" id="A45841">
    <property type="entry name" value="A45841"/>
</dbReference>
<dbReference type="PIR" id="A45878">
    <property type="entry name" value="A45878"/>
</dbReference>
<dbReference type="RefSeq" id="NP_038716.2">
    <property type="nucleotide sequence ID" value="NM_013688.3"/>
</dbReference>
<dbReference type="SMR" id="A6H639"/>
<dbReference type="FunCoup" id="A6H639">
    <property type="interactions" value="31"/>
</dbReference>
<dbReference type="STRING" id="10090.ENSMUSP00000109175"/>
<dbReference type="GlyGen" id="A6H639">
    <property type="glycosylation" value="1 site"/>
</dbReference>
<dbReference type="iPTMnet" id="A6H639"/>
<dbReference type="PhosphoSitePlus" id="A6H639"/>
<dbReference type="SwissPalm" id="A6H639"/>
<dbReference type="PaxDb" id="10090-ENSMUSP00000109175"/>
<dbReference type="ProteomicsDB" id="263098"/>
<dbReference type="Antibodypedia" id="30669">
    <property type="antibodies" value="75 antibodies from 19 providers"/>
</dbReference>
<dbReference type="Ensembl" id="ENSMUST00000113547.2">
    <property type="protein sequence ID" value="ENSMUSP00000109175.2"/>
    <property type="gene ID" value="ENSMUSG00000023949.8"/>
</dbReference>
<dbReference type="Ensembl" id="ENSMUST00000233588.2">
    <property type="protein sequence ID" value="ENSMUSP00000156920.2"/>
    <property type="gene ID" value="ENSMUSG00000023949.8"/>
</dbReference>
<dbReference type="GeneID" id="21645"/>
<dbReference type="KEGG" id="mmu:21645"/>
<dbReference type="UCSC" id="uc008cqt.1">
    <property type="organism name" value="mouse"/>
</dbReference>
<dbReference type="AGR" id="MGI:98640"/>
<dbReference type="CTD" id="202500"/>
<dbReference type="MGI" id="MGI:98640">
    <property type="gene designation" value="Tcte1"/>
</dbReference>
<dbReference type="VEuPathDB" id="HostDB:ENSMUSG00000023949"/>
<dbReference type="eggNOG" id="KOG0619">
    <property type="taxonomic scope" value="Eukaryota"/>
</dbReference>
<dbReference type="GeneTree" id="ENSGT00940000159341"/>
<dbReference type="HOGENOM" id="CLU_029623_1_0_1"/>
<dbReference type="InParanoid" id="A6H639"/>
<dbReference type="OMA" id="PVCHVAR"/>
<dbReference type="OrthoDB" id="341587at2759"/>
<dbReference type="PhylomeDB" id="A6H639"/>
<dbReference type="TreeFam" id="TF325870"/>
<dbReference type="BioGRID-ORCS" id="21645">
    <property type="hits" value="2 hits in 76 CRISPR screens"/>
</dbReference>
<dbReference type="ChiTaRS" id="Tcte1">
    <property type="organism name" value="mouse"/>
</dbReference>
<dbReference type="PRO" id="PR:A6H639"/>
<dbReference type="Proteomes" id="UP000000589">
    <property type="component" value="Chromosome 17"/>
</dbReference>
<dbReference type="RNAct" id="A6H639">
    <property type="molecule type" value="protein"/>
</dbReference>
<dbReference type="Bgee" id="ENSMUSG00000023949">
    <property type="expression patterns" value="Expressed in spermatid and 76 other cell types or tissues"/>
</dbReference>
<dbReference type="GO" id="GO:0005737">
    <property type="term" value="C:cytoplasm"/>
    <property type="evidence" value="ECO:0007669"/>
    <property type="project" value="UniProtKB-KW"/>
</dbReference>
<dbReference type="GO" id="GO:0005856">
    <property type="term" value="C:cytoskeleton"/>
    <property type="evidence" value="ECO:0007669"/>
    <property type="project" value="UniProtKB-KW"/>
</dbReference>
<dbReference type="GO" id="GO:0036126">
    <property type="term" value="C:sperm flagellum"/>
    <property type="evidence" value="ECO:0000314"/>
    <property type="project" value="UniProtKB"/>
</dbReference>
<dbReference type="GO" id="GO:0030317">
    <property type="term" value="P:flagellated sperm motility"/>
    <property type="evidence" value="ECO:0000315"/>
    <property type="project" value="UniProtKB"/>
</dbReference>
<dbReference type="CDD" id="cd00116">
    <property type="entry name" value="LRR_RI"/>
    <property type="match status" value="1"/>
</dbReference>
<dbReference type="FunFam" id="3.80.10.10:FF:000373">
    <property type="entry name" value="T-complex-associated testis-expressed protein 1"/>
    <property type="match status" value="1"/>
</dbReference>
<dbReference type="Gene3D" id="3.80.10.10">
    <property type="entry name" value="Ribonuclease Inhibitor"/>
    <property type="match status" value="2"/>
</dbReference>
<dbReference type="InterPro" id="IPR052410">
    <property type="entry name" value="DRC5"/>
</dbReference>
<dbReference type="InterPro" id="IPR001611">
    <property type="entry name" value="Leu-rich_rpt"/>
</dbReference>
<dbReference type="InterPro" id="IPR032675">
    <property type="entry name" value="LRR_dom_sf"/>
</dbReference>
<dbReference type="PANTHER" id="PTHR24107:SF27">
    <property type="entry name" value="DYNEIN REGULATORY COMPLEX SUBUNIT 5"/>
    <property type="match status" value="1"/>
</dbReference>
<dbReference type="PANTHER" id="PTHR24107">
    <property type="entry name" value="YNEIN REGULATORY COMPLEX SUBUNIT 5"/>
    <property type="match status" value="1"/>
</dbReference>
<dbReference type="Pfam" id="PF13516">
    <property type="entry name" value="LRR_6"/>
    <property type="match status" value="4"/>
</dbReference>
<dbReference type="SMART" id="SM00368">
    <property type="entry name" value="LRR_RI"/>
    <property type="match status" value="5"/>
</dbReference>
<dbReference type="SUPFAM" id="SSF52047">
    <property type="entry name" value="RNI-like"/>
    <property type="match status" value="1"/>
</dbReference>
<accession>A6H639</accession>
<accession>Q62294</accession>
<protein>
    <recommendedName>
        <fullName evidence="8">Dynein regulatory complex subunit 5</fullName>
    </recommendedName>
    <alternativeName>
        <fullName>T-complex-associated testis-expressed protein 1</fullName>
        <shortName>Tcte-1</shortName>
    </alternativeName>
</protein>
<sequence length="498" mass="55518">MQETPSVPSNSSSHSQSVLTIQRQVSALGSSSTGPTSLKTSSTPTPGQLKTKVPNVRRMRRIISEDAEWSLAIVPLLTELCIQHIVKNFQNNPILKQLPLEHQKKVLSNLPPELPLTVTANLIDDENYWHRCCIKRWSVCHVSRHGGSWKRMFFERHLENLLKLFIPGTTDPNVILDLLPLCRNYVRRIHVDQFLPPVRMPTPLQGEEQSDSGSEGEGSEPEKDHYQLQTLVGGLKHLEELDLVYGVKDCGMNFEWNLFLFTYRDCYSLAATIKACHTLKIFKLTRSKVDDDKARILIRSLLDHPALEELDLSHNLIGDRGARAAAKLLSHSRLRVLNLANNQLQAPGAQSLAHALAHNTNLVFLNLRLNCIEDEGGQAIAHALETNKCLSVLHLGGNKLSEPTATLLSQMLTVNTTLVSLNLSCNHIGQDGGKQLLEGISDNKTILEFDLRLSDVSQESEYLIGQVLHANREAARQRTLNPGHFSSPTNNCTENSVV</sequence>
<organism>
    <name type="scientific">Mus musculus</name>
    <name type="common">Mouse</name>
    <dbReference type="NCBI Taxonomy" id="10090"/>
    <lineage>
        <taxon>Eukaryota</taxon>
        <taxon>Metazoa</taxon>
        <taxon>Chordata</taxon>
        <taxon>Craniata</taxon>
        <taxon>Vertebrata</taxon>
        <taxon>Euteleostomi</taxon>
        <taxon>Mammalia</taxon>
        <taxon>Eutheria</taxon>
        <taxon>Euarchontoglires</taxon>
        <taxon>Glires</taxon>
        <taxon>Rodentia</taxon>
        <taxon>Myomorpha</taxon>
        <taxon>Muroidea</taxon>
        <taxon>Muridae</taxon>
        <taxon>Murinae</taxon>
        <taxon>Mus</taxon>
        <taxon>Mus</taxon>
    </lineage>
</organism>
<keyword id="KW-0966">Cell projection</keyword>
<keyword id="KW-0969">Cilium</keyword>
<keyword id="KW-0963">Cytoplasm</keyword>
<keyword id="KW-0206">Cytoskeleton</keyword>
<keyword id="KW-0282">Flagellum</keyword>
<keyword id="KW-0433">Leucine-rich repeat</keyword>
<keyword id="KW-1185">Reference proteome</keyword>
<keyword id="KW-0677">Repeat</keyword>
<name>DRC5_MOUSE</name>
<comment type="function">
    <text evidence="1 5">Component of the nexin-dynein regulatory complex (N-DRC) a key regulator of ciliary/flagellar motility which maintains the alignment and integrity of the distal axoneme and regulates microtubule sliding in motile axonemes. May play a role in the assembly of N-DRC (By similarity). Required for sperm motility (PubMed:28630322).</text>
</comment>
<comment type="subunit">
    <text evidence="2 5 6">Component of the nexin-dynein regulatory complex (N-DRC). Interacts with DRC1 (By similarity). Interacts with FBXL13/DRC6, DRC3 and DRC7 (PubMed:28630322, PubMed:31961863).</text>
</comment>
<comment type="subcellular location">
    <subcellularLocation>
        <location evidence="7">Cell projection</location>
        <location evidence="7">Cilium</location>
        <location evidence="7">Flagellum</location>
    </subcellularLocation>
    <subcellularLocation>
        <location evidence="1">Cytoplasm</location>
        <location evidence="1">Cytoskeleton</location>
        <location evidence="1">Flagellum axoneme</location>
    </subcellularLocation>
    <text evidence="7">Detected along the length of the sperm flagellum.</text>
</comment>
<comment type="tissue specificity">
    <text evidence="4 7">Testis-specific (at protein level).</text>
</comment>
<comment type="disruption phenotype">
    <text evidence="5">Male mice are sterile due to asthenozoospermia (sperm with diminished progressive motility) and the diminished motility is due to aberrant flagellar function, with sperm tails contracting toward one side and generating a circular path for sperm.</text>
</comment>
<comment type="similarity">
    <text evidence="9">Belongs to the DRC5 family.</text>
</comment>
<comment type="sequence caution" evidence="9">
    <conflict type="frameshift">
        <sequence resource="EMBL-CDS" id="AAA40406"/>
    </conflict>
</comment>
<gene>
    <name type="primary">Tcte1</name>
    <name type="synonym">D17sil1</name>
    <name evidence="8" type="synonym">Drc5</name>
</gene>
<feature type="chain" id="PRO_0000326527" description="Dynein regulatory complex subunit 5">
    <location>
        <begin position="1"/>
        <end position="498"/>
    </location>
</feature>
<feature type="repeat" description="LRR 1">
    <location>
        <begin position="276"/>
        <end position="299"/>
    </location>
</feature>
<feature type="repeat" description="LRR 2">
    <location>
        <begin position="306"/>
        <end position="327"/>
    </location>
</feature>
<feature type="repeat" description="LRR 3">
    <location>
        <begin position="333"/>
        <end position="353"/>
    </location>
</feature>
<feature type="repeat" description="LRR 4">
    <location>
        <begin position="361"/>
        <end position="382"/>
    </location>
</feature>
<feature type="repeat" description="LRR 5">
    <location>
        <begin position="389"/>
        <end position="409"/>
    </location>
</feature>
<feature type="repeat" description="LRR 6">
    <location>
        <begin position="417"/>
        <end position="438"/>
    </location>
</feature>
<feature type="region of interest" description="Disordered" evidence="3">
    <location>
        <begin position="27"/>
        <end position="52"/>
    </location>
</feature>
<feature type="region of interest" description="Disordered" evidence="3">
    <location>
        <begin position="200"/>
        <end position="223"/>
    </location>
</feature>
<feature type="compositionally biased region" description="Low complexity" evidence="3">
    <location>
        <begin position="28"/>
        <end position="47"/>
    </location>
</feature>
<feature type="sequence conflict" description="In Ref. 1; AAA40406." evidence="9" ref="1">
    <original>S</original>
    <variation>N</variation>
    <location>
        <position position="30"/>
    </location>
</feature>
<feature type="sequence conflict" description="In Ref. 1; AAA40406." evidence="9" ref="1">
    <original>V</original>
    <variation>A</variation>
    <location>
        <position position="498"/>
    </location>
</feature>